<evidence type="ECO:0000255" key="1">
    <source>
        <dbReference type="HAMAP-Rule" id="MF_01018"/>
    </source>
</evidence>
<accession>A5IWA6</accession>
<reference key="1">
    <citation type="submission" date="2007-05" db="EMBL/GenBank/DDBJ databases">
        <title>Complete sequence of chromosome of Staphylococcus aureus subsp. aureus JH9.</title>
        <authorList>
            <consortium name="US DOE Joint Genome Institute"/>
            <person name="Copeland A."/>
            <person name="Lucas S."/>
            <person name="Lapidus A."/>
            <person name="Barry K."/>
            <person name="Detter J.C."/>
            <person name="Glavina del Rio T."/>
            <person name="Hammon N."/>
            <person name="Israni S."/>
            <person name="Pitluck S."/>
            <person name="Chain P."/>
            <person name="Malfatti S."/>
            <person name="Shin M."/>
            <person name="Vergez L."/>
            <person name="Schmutz J."/>
            <person name="Larimer F."/>
            <person name="Land M."/>
            <person name="Hauser L."/>
            <person name="Kyrpides N."/>
            <person name="Kim E."/>
            <person name="Tomasz A."/>
            <person name="Richardson P."/>
        </authorList>
    </citation>
    <scope>NUCLEOTIDE SEQUENCE [LARGE SCALE GENOMIC DNA]</scope>
    <source>
        <strain>JH9</strain>
    </source>
</reference>
<name>HIS1_STAA9</name>
<sequence length="204" mass="22643">MLRIAIAKGRLMDSLINYLDVIEYTTLSETLKNRERQLLLSVDNIECILVKGSDVPIYVEQGMADIGIVGSDILDERQYNVNNLLNMPFGACHFAVAAKPETTNYRKIATSYVHTAETYFKSKGIDVELIKLNGSVELACVVDMVDGIVDIVQTGTTLKANGLVEKQHISDINARLITNKAAYFKKSQLIEQFIRSLEVSIANA</sequence>
<gene>
    <name evidence="1" type="primary">hisG</name>
    <name type="ordered locus">SaurJH9_2703</name>
</gene>
<feature type="chain" id="PRO_1000084162" description="ATP phosphoribosyltransferase">
    <location>
        <begin position="1"/>
        <end position="204"/>
    </location>
</feature>
<comment type="function">
    <text evidence="1">Catalyzes the condensation of ATP and 5-phosphoribose 1-diphosphate to form N'-(5'-phosphoribosyl)-ATP (PR-ATP). Has a crucial role in the pathway because the rate of histidine biosynthesis seems to be controlled primarily by regulation of HisG enzymatic activity.</text>
</comment>
<comment type="catalytic activity">
    <reaction evidence="1">
        <text>1-(5-phospho-beta-D-ribosyl)-ATP + diphosphate = 5-phospho-alpha-D-ribose 1-diphosphate + ATP</text>
        <dbReference type="Rhea" id="RHEA:18473"/>
        <dbReference type="ChEBI" id="CHEBI:30616"/>
        <dbReference type="ChEBI" id="CHEBI:33019"/>
        <dbReference type="ChEBI" id="CHEBI:58017"/>
        <dbReference type="ChEBI" id="CHEBI:73183"/>
        <dbReference type="EC" id="2.4.2.17"/>
    </reaction>
</comment>
<comment type="pathway">
    <text evidence="1">Amino-acid biosynthesis; L-histidine biosynthesis; L-histidine from 5-phospho-alpha-D-ribose 1-diphosphate: step 1/9.</text>
</comment>
<comment type="subunit">
    <text evidence="1">Heteromultimer composed of HisG and HisZ subunits.</text>
</comment>
<comment type="subcellular location">
    <subcellularLocation>
        <location evidence="1">Cytoplasm</location>
    </subcellularLocation>
</comment>
<comment type="domain">
    <text>Lacks the C-terminal regulatory region which is replaced by HisZ.</text>
</comment>
<comment type="similarity">
    <text evidence="1">Belongs to the ATP phosphoribosyltransferase family. Short subfamily.</text>
</comment>
<organism>
    <name type="scientific">Staphylococcus aureus (strain JH9)</name>
    <dbReference type="NCBI Taxonomy" id="359786"/>
    <lineage>
        <taxon>Bacteria</taxon>
        <taxon>Bacillati</taxon>
        <taxon>Bacillota</taxon>
        <taxon>Bacilli</taxon>
        <taxon>Bacillales</taxon>
        <taxon>Staphylococcaceae</taxon>
        <taxon>Staphylococcus</taxon>
    </lineage>
</organism>
<keyword id="KW-0028">Amino-acid biosynthesis</keyword>
<keyword id="KW-0067">ATP-binding</keyword>
<keyword id="KW-0963">Cytoplasm</keyword>
<keyword id="KW-0328">Glycosyltransferase</keyword>
<keyword id="KW-0368">Histidine biosynthesis</keyword>
<keyword id="KW-0547">Nucleotide-binding</keyword>
<keyword id="KW-0808">Transferase</keyword>
<dbReference type="EC" id="2.4.2.17" evidence="1"/>
<dbReference type="EMBL" id="CP000703">
    <property type="protein sequence ID" value="ABQ50479.1"/>
    <property type="molecule type" value="Genomic_DNA"/>
</dbReference>
<dbReference type="RefSeq" id="WP_000944149.1">
    <property type="nucleotide sequence ID" value="NC_009487.1"/>
</dbReference>
<dbReference type="SMR" id="A5IWA6"/>
<dbReference type="KEGG" id="saj:SaurJH9_2703"/>
<dbReference type="HOGENOM" id="CLU_038115_2_0_9"/>
<dbReference type="UniPathway" id="UPA00031">
    <property type="reaction ID" value="UER00006"/>
</dbReference>
<dbReference type="GO" id="GO:0005737">
    <property type="term" value="C:cytoplasm"/>
    <property type="evidence" value="ECO:0007669"/>
    <property type="project" value="UniProtKB-SubCell"/>
</dbReference>
<dbReference type="GO" id="GO:0005524">
    <property type="term" value="F:ATP binding"/>
    <property type="evidence" value="ECO:0007669"/>
    <property type="project" value="UniProtKB-KW"/>
</dbReference>
<dbReference type="GO" id="GO:0003879">
    <property type="term" value="F:ATP phosphoribosyltransferase activity"/>
    <property type="evidence" value="ECO:0007669"/>
    <property type="project" value="UniProtKB-UniRule"/>
</dbReference>
<dbReference type="GO" id="GO:0000105">
    <property type="term" value="P:L-histidine biosynthetic process"/>
    <property type="evidence" value="ECO:0007669"/>
    <property type="project" value="UniProtKB-UniRule"/>
</dbReference>
<dbReference type="CDD" id="cd13595">
    <property type="entry name" value="PBP2_HisGs"/>
    <property type="match status" value="1"/>
</dbReference>
<dbReference type="FunFam" id="3.40.190.10:FF:000008">
    <property type="entry name" value="ATP phosphoribosyltransferase"/>
    <property type="match status" value="1"/>
</dbReference>
<dbReference type="Gene3D" id="3.40.190.10">
    <property type="entry name" value="Periplasmic binding protein-like II"/>
    <property type="match status" value="2"/>
</dbReference>
<dbReference type="HAMAP" id="MF_01018">
    <property type="entry name" value="HisG_Short"/>
    <property type="match status" value="1"/>
</dbReference>
<dbReference type="InterPro" id="IPR013820">
    <property type="entry name" value="ATP_PRibTrfase_cat"/>
</dbReference>
<dbReference type="InterPro" id="IPR001348">
    <property type="entry name" value="ATP_PRibTrfase_HisG"/>
</dbReference>
<dbReference type="InterPro" id="IPR024893">
    <property type="entry name" value="ATP_PRibTrfase_HisG_short"/>
</dbReference>
<dbReference type="NCBIfam" id="TIGR00070">
    <property type="entry name" value="hisG"/>
    <property type="match status" value="1"/>
</dbReference>
<dbReference type="PANTHER" id="PTHR21403:SF8">
    <property type="entry name" value="ATP PHOSPHORIBOSYLTRANSFERASE"/>
    <property type="match status" value="1"/>
</dbReference>
<dbReference type="PANTHER" id="PTHR21403">
    <property type="entry name" value="ATP PHOSPHORIBOSYLTRANSFERASE ATP-PRTASE"/>
    <property type="match status" value="1"/>
</dbReference>
<dbReference type="Pfam" id="PF01634">
    <property type="entry name" value="HisG"/>
    <property type="match status" value="1"/>
</dbReference>
<dbReference type="SUPFAM" id="SSF53850">
    <property type="entry name" value="Periplasmic binding protein-like II"/>
    <property type="match status" value="1"/>
</dbReference>
<protein>
    <recommendedName>
        <fullName evidence="1">ATP phosphoribosyltransferase</fullName>
        <shortName evidence="1">ATP-PRT</shortName>
        <shortName evidence="1">ATP-PRTase</shortName>
        <ecNumber evidence="1">2.4.2.17</ecNumber>
    </recommendedName>
</protein>
<proteinExistence type="inferred from homology"/>